<dbReference type="EMBL" id="CP000937">
    <property type="protein sequence ID" value="ABZ87357.1"/>
    <property type="molecule type" value="Genomic_DNA"/>
</dbReference>
<dbReference type="SMR" id="B0TX99"/>
<dbReference type="KEGG" id="fph:Fphi_1133"/>
<dbReference type="eggNOG" id="COG0249">
    <property type="taxonomic scope" value="Bacteria"/>
</dbReference>
<dbReference type="HOGENOM" id="CLU_002472_4_1_6"/>
<dbReference type="GO" id="GO:0005829">
    <property type="term" value="C:cytosol"/>
    <property type="evidence" value="ECO:0007669"/>
    <property type="project" value="TreeGrafter"/>
</dbReference>
<dbReference type="GO" id="GO:0005524">
    <property type="term" value="F:ATP binding"/>
    <property type="evidence" value="ECO:0007669"/>
    <property type="project" value="UniProtKB-UniRule"/>
</dbReference>
<dbReference type="GO" id="GO:0140664">
    <property type="term" value="F:ATP-dependent DNA damage sensor activity"/>
    <property type="evidence" value="ECO:0007669"/>
    <property type="project" value="InterPro"/>
</dbReference>
<dbReference type="GO" id="GO:0003684">
    <property type="term" value="F:damaged DNA binding"/>
    <property type="evidence" value="ECO:0007669"/>
    <property type="project" value="UniProtKB-UniRule"/>
</dbReference>
<dbReference type="GO" id="GO:0030983">
    <property type="term" value="F:mismatched DNA binding"/>
    <property type="evidence" value="ECO:0007669"/>
    <property type="project" value="InterPro"/>
</dbReference>
<dbReference type="GO" id="GO:0006298">
    <property type="term" value="P:mismatch repair"/>
    <property type="evidence" value="ECO:0007669"/>
    <property type="project" value="UniProtKB-UniRule"/>
</dbReference>
<dbReference type="FunFam" id="1.10.1420.10:FF:000002">
    <property type="entry name" value="DNA mismatch repair protein MutS"/>
    <property type="match status" value="1"/>
</dbReference>
<dbReference type="FunFam" id="3.40.1170.10:FF:000001">
    <property type="entry name" value="DNA mismatch repair protein MutS"/>
    <property type="match status" value="1"/>
</dbReference>
<dbReference type="FunFam" id="3.40.50.300:FF:000870">
    <property type="entry name" value="MutS protein homolog 4"/>
    <property type="match status" value="1"/>
</dbReference>
<dbReference type="Gene3D" id="1.10.1420.10">
    <property type="match status" value="2"/>
</dbReference>
<dbReference type="Gene3D" id="3.40.1170.10">
    <property type="entry name" value="DNA repair protein MutS, domain I"/>
    <property type="match status" value="1"/>
</dbReference>
<dbReference type="Gene3D" id="3.30.420.110">
    <property type="entry name" value="MutS, connector domain"/>
    <property type="match status" value="1"/>
</dbReference>
<dbReference type="Gene3D" id="3.40.50.300">
    <property type="entry name" value="P-loop containing nucleotide triphosphate hydrolases"/>
    <property type="match status" value="1"/>
</dbReference>
<dbReference type="HAMAP" id="MF_00096">
    <property type="entry name" value="MutS"/>
    <property type="match status" value="1"/>
</dbReference>
<dbReference type="InterPro" id="IPR005748">
    <property type="entry name" value="DNA_mismatch_repair_MutS"/>
</dbReference>
<dbReference type="InterPro" id="IPR007695">
    <property type="entry name" value="DNA_mismatch_repair_MutS-lik_N"/>
</dbReference>
<dbReference type="InterPro" id="IPR017261">
    <property type="entry name" value="DNA_mismatch_repair_MutS/MSH"/>
</dbReference>
<dbReference type="InterPro" id="IPR000432">
    <property type="entry name" value="DNA_mismatch_repair_MutS_C"/>
</dbReference>
<dbReference type="InterPro" id="IPR007861">
    <property type="entry name" value="DNA_mismatch_repair_MutS_clamp"/>
</dbReference>
<dbReference type="InterPro" id="IPR007696">
    <property type="entry name" value="DNA_mismatch_repair_MutS_core"/>
</dbReference>
<dbReference type="InterPro" id="IPR016151">
    <property type="entry name" value="DNA_mismatch_repair_MutS_N"/>
</dbReference>
<dbReference type="InterPro" id="IPR036187">
    <property type="entry name" value="DNA_mismatch_repair_MutS_sf"/>
</dbReference>
<dbReference type="InterPro" id="IPR007860">
    <property type="entry name" value="DNA_mmatch_repair_MutS_con_dom"/>
</dbReference>
<dbReference type="InterPro" id="IPR045076">
    <property type="entry name" value="MutS"/>
</dbReference>
<dbReference type="InterPro" id="IPR036678">
    <property type="entry name" value="MutS_con_dom_sf"/>
</dbReference>
<dbReference type="InterPro" id="IPR027417">
    <property type="entry name" value="P-loop_NTPase"/>
</dbReference>
<dbReference type="NCBIfam" id="TIGR01070">
    <property type="entry name" value="mutS1"/>
    <property type="match status" value="1"/>
</dbReference>
<dbReference type="NCBIfam" id="NF003810">
    <property type="entry name" value="PRK05399.1"/>
    <property type="match status" value="1"/>
</dbReference>
<dbReference type="PANTHER" id="PTHR11361:SF34">
    <property type="entry name" value="DNA MISMATCH REPAIR PROTEIN MSH1, MITOCHONDRIAL"/>
    <property type="match status" value="1"/>
</dbReference>
<dbReference type="PANTHER" id="PTHR11361">
    <property type="entry name" value="DNA MISMATCH REPAIR PROTEIN MUTS FAMILY MEMBER"/>
    <property type="match status" value="1"/>
</dbReference>
<dbReference type="Pfam" id="PF01624">
    <property type="entry name" value="MutS_I"/>
    <property type="match status" value="1"/>
</dbReference>
<dbReference type="Pfam" id="PF05188">
    <property type="entry name" value="MutS_II"/>
    <property type="match status" value="1"/>
</dbReference>
<dbReference type="Pfam" id="PF05192">
    <property type="entry name" value="MutS_III"/>
    <property type="match status" value="1"/>
</dbReference>
<dbReference type="Pfam" id="PF05190">
    <property type="entry name" value="MutS_IV"/>
    <property type="match status" value="1"/>
</dbReference>
<dbReference type="Pfam" id="PF00488">
    <property type="entry name" value="MutS_V"/>
    <property type="match status" value="1"/>
</dbReference>
<dbReference type="PIRSF" id="PIRSF037677">
    <property type="entry name" value="DNA_mis_repair_Msh6"/>
    <property type="match status" value="1"/>
</dbReference>
<dbReference type="SMART" id="SM00534">
    <property type="entry name" value="MUTSac"/>
    <property type="match status" value="1"/>
</dbReference>
<dbReference type="SMART" id="SM00533">
    <property type="entry name" value="MUTSd"/>
    <property type="match status" value="1"/>
</dbReference>
<dbReference type="SUPFAM" id="SSF55271">
    <property type="entry name" value="DNA repair protein MutS, domain I"/>
    <property type="match status" value="1"/>
</dbReference>
<dbReference type="SUPFAM" id="SSF53150">
    <property type="entry name" value="DNA repair protein MutS, domain II"/>
    <property type="match status" value="1"/>
</dbReference>
<dbReference type="SUPFAM" id="SSF48334">
    <property type="entry name" value="DNA repair protein MutS, domain III"/>
    <property type="match status" value="1"/>
</dbReference>
<dbReference type="SUPFAM" id="SSF52540">
    <property type="entry name" value="P-loop containing nucleoside triphosphate hydrolases"/>
    <property type="match status" value="1"/>
</dbReference>
<dbReference type="PROSITE" id="PS00486">
    <property type="entry name" value="DNA_MISMATCH_REPAIR_2"/>
    <property type="match status" value="1"/>
</dbReference>
<feature type="chain" id="PRO_0000335155" description="DNA mismatch repair protein MutS">
    <location>
        <begin position="1"/>
        <end position="848"/>
    </location>
</feature>
<feature type="binding site" evidence="1">
    <location>
        <begin position="610"/>
        <end position="617"/>
    </location>
    <ligand>
        <name>ATP</name>
        <dbReference type="ChEBI" id="CHEBI:30616"/>
    </ligand>
</feature>
<organism>
    <name type="scientific">Francisella philomiragia subsp. philomiragia (strain ATCC 25017 / CCUG 19701 / FSC 153 / O#319-036)</name>
    <dbReference type="NCBI Taxonomy" id="484022"/>
    <lineage>
        <taxon>Bacteria</taxon>
        <taxon>Pseudomonadati</taxon>
        <taxon>Pseudomonadota</taxon>
        <taxon>Gammaproteobacteria</taxon>
        <taxon>Thiotrichales</taxon>
        <taxon>Francisellaceae</taxon>
        <taxon>Francisella</taxon>
    </lineage>
</organism>
<gene>
    <name evidence="1" type="primary">mutS</name>
    <name type="ordered locus">Fphi_1133</name>
</gene>
<sequence length="848" mass="96128">MQEVSNHTPMIQQYLKIKSQYPDILLFYRMGDFYELFFDDAKNAAELLDITLTARGKSNGDSIPMAGVPYHAAEGYIAKIVKKGLSVAICEQIGDPSTSKGPVERQVTRIITPATVSEEAFLDSNQDSILVSIYEKNNKYHIAYTSYTQGKIHLINTVTNSSDLKNQILKLSPQEIITNSNSLVEKNIFNKPVKVLEEWYFSNFEAKKHILNSFDNSFANNILNLYKKEQLTVIGSILAYLTNTLKSTPKHISDILLDEDQNILNIDINSRNNLELDNNSKSSLLNIMDKCKTSLGSRLLRRYFKNPTRDLNKISLRHNVIKSFKQHHYFLKIQDILSYINDIERIISRVALGTVKPKDLVSLNSSLEQLPKLKSLLEKINTSEIININNHIHQIDELTKLLNKAIVDNPPMTIRDGGVIKHGFDQELDELRGLKDNSYDFLLKFETLQKQKTGINTLKVGYNRVHGYYIELSKQYADKVPTEYIRRQTLKASERYITDELKAFEDKILSAKEKALAREKLIYDTLLNKVLEYYSQIQQTAASIAKIDVLANFAERAIKLNLNQPKFNKTGKLDIKEARHLAIEQNIDEPFIPNDTLLSTDTYTLEIITGPNMGGKSTYMRQVAQLIFLAYIGSFVPASYADIGDIDTIYTRIGASDDISSGRSTFMVEMTETAYILNNATKKSLVIMDEIGRGTSTFDGLSLAKACAEKFAKIGAMTLFATHYFELTELVNQYPNTKNIHFEAKEYKDNIYFMHKAVAGAAKKSYGIQVAKLAGISKDVLDSAKKNLANLEKGQDKLDTIDQPQQNLQLDQTPQKNHIKERLETIDINSITPIEALNILFELKKTLI</sequence>
<accession>B0TX99</accession>
<evidence type="ECO:0000255" key="1">
    <source>
        <dbReference type="HAMAP-Rule" id="MF_00096"/>
    </source>
</evidence>
<comment type="function">
    <text evidence="1">This protein is involved in the repair of mismatches in DNA. It is possible that it carries out the mismatch recognition step. This protein has a weak ATPase activity.</text>
</comment>
<comment type="similarity">
    <text evidence="1">Belongs to the DNA mismatch repair MutS family.</text>
</comment>
<protein>
    <recommendedName>
        <fullName evidence="1">DNA mismatch repair protein MutS</fullName>
    </recommendedName>
</protein>
<keyword id="KW-0067">ATP-binding</keyword>
<keyword id="KW-0227">DNA damage</keyword>
<keyword id="KW-0234">DNA repair</keyword>
<keyword id="KW-0238">DNA-binding</keyword>
<keyword id="KW-0547">Nucleotide-binding</keyword>
<name>MUTS_FRAP2</name>
<proteinExistence type="inferred from homology"/>
<reference key="1">
    <citation type="submission" date="2007-12" db="EMBL/GenBank/DDBJ databases">
        <title>Complete sequence of chromosome of Francisella philomiragia subsp. philomiragia ATCC 25017.</title>
        <authorList>
            <consortium name="US DOE Joint Genome Institute"/>
            <person name="Copeland A."/>
            <person name="Lucas S."/>
            <person name="Lapidus A."/>
            <person name="Barry K."/>
            <person name="Detter J.C."/>
            <person name="Glavina del Rio T."/>
            <person name="Hammon N."/>
            <person name="Israni S."/>
            <person name="Dalin E."/>
            <person name="Tice H."/>
            <person name="Pitluck S."/>
            <person name="Chain P."/>
            <person name="Malfatti S."/>
            <person name="Shin M."/>
            <person name="Vergez L."/>
            <person name="Schmutz J."/>
            <person name="Larimer F."/>
            <person name="Land M."/>
            <person name="Hauser L."/>
            <person name="Richardson P."/>
        </authorList>
    </citation>
    <scope>NUCLEOTIDE SEQUENCE [LARGE SCALE GENOMIC DNA]</scope>
    <source>
        <strain>ATCC 25017 / CCUG 19701 / FSC 153 / O#319-036</strain>
    </source>
</reference>